<keyword id="KW-0963">Cytoplasm</keyword>
<keyword id="KW-0342">GTP-binding</keyword>
<keyword id="KW-0378">Hydrolase</keyword>
<keyword id="KW-0479">Metal-binding</keyword>
<keyword id="KW-0547">Nucleotide-binding</keyword>
<keyword id="KW-0690">Ribosome biogenesis</keyword>
<keyword id="KW-0694">RNA-binding</keyword>
<keyword id="KW-0699">rRNA-binding</keyword>
<keyword id="KW-0862">Zinc</keyword>
<name>RSGA_PSEP1</name>
<feature type="chain" id="PRO_1000188126" description="Small ribosomal subunit biogenesis GTPase RsgA">
    <location>
        <begin position="1"/>
        <end position="343"/>
    </location>
</feature>
<feature type="domain" description="CP-type G" evidence="2">
    <location>
        <begin position="116"/>
        <end position="275"/>
    </location>
</feature>
<feature type="binding site" evidence="1">
    <location>
        <begin position="163"/>
        <end position="166"/>
    </location>
    <ligand>
        <name>GTP</name>
        <dbReference type="ChEBI" id="CHEBI:37565"/>
    </ligand>
</feature>
<feature type="binding site" evidence="1">
    <location>
        <begin position="217"/>
        <end position="225"/>
    </location>
    <ligand>
        <name>GTP</name>
        <dbReference type="ChEBI" id="CHEBI:37565"/>
    </ligand>
</feature>
<feature type="binding site" evidence="1">
    <location>
        <position position="299"/>
    </location>
    <ligand>
        <name>Zn(2+)</name>
        <dbReference type="ChEBI" id="CHEBI:29105"/>
    </ligand>
</feature>
<feature type="binding site" evidence="1">
    <location>
        <position position="304"/>
    </location>
    <ligand>
        <name>Zn(2+)</name>
        <dbReference type="ChEBI" id="CHEBI:29105"/>
    </ligand>
</feature>
<feature type="binding site" evidence="1">
    <location>
        <position position="306"/>
    </location>
    <ligand>
        <name>Zn(2+)</name>
        <dbReference type="ChEBI" id="CHEBI:29105"/>
    </ligand>
</feature>
<feature type="binding site" evidence="1">
    <location>
        <position position="312"/>
    </location>
    <ligand>
        <name>Zn(2+)</name>
        <dbReference type="ChEBI" id="CHEBI:29105"/>
    </ligand>
</feature>
<reference key="1">
    <citation type="submission" date="2007-05" db="EMBL/GenBank/DDBJ databases">
        <title>Complete sequence of Pseudomonas putida F1.</title>
        <authorList>
            <consortium name="US DOE Joint Genome Institute"/>
            <person name="Copeland A."/>
            <person name="Lucas S."/>
            <person name="Lapidus A."/>
            <person name="Barry K."/>
            <person name="Detter J.C."/>
            <person name="Glavina del Rio T."/>
            <person name="Hammon N."/>
            <person name="Israni S."/>
            <person name="Dalin E."/>
            <person name="Tice H."/>
            <person name="Pitluck S."/>
            <person name="Chain P."/>
            <person name="Malfatti S."/>
            <person name="Shin M."/>
            <person name="Vergez L."/>
            <person name="Schmutz J."/>
            <person name="Larimer F."/>
            <person name="Land M."/>
            <person name="Hauser L."/>
            <person name="Kyrpides N."/>
            <person name="Lykidis A."/>
            <person name="Parales R."/>
            <person name="Richardson P."/>
        </authorList>
    </citation>
    <scope>NUCLEOTIDE SEQUENCE [LARGE SCALE GENOMIC DNA]</scope>
    <source>
        <strain>ATCC 700007 / DSM 6899 / JCM 31910 / BCRC 17059 / LMG 24140 / F1</strain>
    </source>
</reference>
<gene>
    <name evidence="1" type="primary">rsgA</name>
    <name type="ordered locus">Pput_4779</name>
</gene>
<dbReference type="EC" id="3.6.1.-" evidence="1"/>
<dbReference type="EMBL" id="CP000712">
    <property type="protein sequence ID" value="ABQ80899.1"/>
    <property type="molecule type" value="Genomic_DNA"/>
</dbReference>
<dbReference type="SMR" id="A5W9T9"/>
<dbReference type="KEGG" id="ppf:Pput_4779"/>
<dbReference type="eggNOG" id="COG1162">
    <property type="taxonomic scope" value="Bacteria"/>
</dbReference>
<dbReference type="HOGENOM" id="CLU_033617_2_0_6"/>
<dbReference type="GO" id="GO:0005737">
    <property type="term" value="C:cytoplasm"/>
    <property type="evidence" value="ECO:0007669"/>
    <property type="project" value="UniProtKB-SubCell"/>
</dbReference>
<dbReference type="GO" id="GO:0005525">
    <property type="term" value="F:GTP binding"/>
    <property type="evidence" value="ECO:0007669"/>
    <property type="project" value="UniProtKB-UniRule"/>
</dbReference>
<dbReference type="GO" id="GO:0003924">
    <property type="term" value="F:GTPase activity"/>
    <property type="evidence" value="ECO:0007669"/>
    <property type="project" value="UniProtKB-UniRule"/>
</dbReference>
<dbReference type="GO" id="GO:0046872">
    <property type="term" value="F:metal ion binding"/>
    <property type="evidence" value="ECO:0007669"/>
    <property type="project" value="UniProtKB-KW"/>
</dbReference>
<dbReference type="GO" id="GO:0019843">
    <property type="term" value="F:rRNA binding"/>
    <property type="evidence" value="ECO:0007669"/>
    <property type="project" value="UniProtKB-KW"/>
</dbReference>
<dbReference type="GO" id="GO:0042274">
    <property type="term" value="P:ribosomal small subunit biogenesis"/>
    <property type="evidence" value="ECO:0007669"/>
    <property type="project" value="UniProtKB-UniRule"/>
</dbReference>
<dbReference type="CDD" id="cd01854">
    <property type="entry name" value="YjeQ_EngC"/>
    <property type="match status" value="1"/>
</dbReference>
<dbReference type="Gene3D" id="2.40.50.140">
    <property type="entry name" value="Nucleic acid-binding proteins"/>
    <property type="match status" value="1"/>
</dbReference>
<dbReference type="Gene3D" id="3.40.50.300">
    <property type="entry name" value="P-loop containing nucleotide triphosphate hydrolases"/>
    <property type="match status" value="1"/>
</dbReference>
<dbReference type="Gene3D" id="1.10.40.50">
    <property type="entry name" value="Probable gtpase engc, domain 3"/>
    <property type="match status" value="1"/>
</dbReference>
<dbReference type="HAMAP" id="MF_01820">
    <property type="entry name" value="GTPase_RsgA"/>
    <property type="match status" value="1"/>
</dbReference>
<dbReference type="InterPro" id="IPR030378">
    <property type="entry name" value="G_CP_dom"/>
</dbReference>
<dbReference type="InterPro" id="IPR012340">
    <property type="entry name" value="NA-bd_OB-fold"/>
</dbReference>
<dbReference type="InterPro" id="IPR027417">
    <property type="entry name" value="P-loop_NTPase"/>
</dbReference>
<dbReference type="InterPro" id="IPR004881">
    <property type="entry name" value="Ribosome_biogen_GTPase_RsgA"/>
</dbReference>
<dbReference type="InterPro" id="IPR010914">
    <property type="entry name" value="RsgA_GTPase_dom"/>
</dbReference>
<dbReference type="NCBIfam" id="NF008931">
    <property type="entry name" value="PRK12288.1"/>
    <property type="match status" value="1"/>
</dbReference>
<dbReference type="NCBIfam" id="TIGR00157">
    <property type="entry name" value="ribosome small subunit-dependent GTPase A"/>
    <property type="match status" value="1"/>
</dbReference>
<dbReference type="PANTHER" id="PTHR32120">
    <property type="entry name" value="SMALL RIBOSOMAL SUBUNIT BIOGENESIS GTPASE RSGA"/>
    <property type="match status" value="1"/>
</dbReference>
<dbReference type="PANTHER" id="PTHR32120:SF11">
    <property type="entry name" value="SMALL RIBOSOMAL SUBUNIT BIOGENESIS GTPASE RSGA 1, MITOCHONDRIAL-RELATED"/>
    <property type="match status" value="1"/>
</dbReference>
<dbReference type="Pfam" id="PF03193">
    <property type="entry name" value="RsgA_GTPase"/>
    <property type="match status" value="1"/>
</dbReference>
<dbReference type="SUPFAM" id="SSF52540">
    <property type="entry name" value="P-loop containing nucleoside triphosphate hydrolases"/>
    <property type="match status" value="1"/>
</dbReference>
<dbReference type="PROSITE" id="PS50936">
    <property type="entry name" value="ENGC_GTPASE"/>
    <property type="match status" value="1"/>
</dbReference>
<dbReference type="PROSITE" id="PS51721">
    <property type="entry name" value="G_CP"/>
    <property type="match status" value="1"/>
</dbReference>
<comment type="function">
    <text evidence="1">One of several proteins that assist in the late maturation steps of the functional core of the 30S ribosomal subunit. Helps release RbfA from mature subunits. May play a role in the assembly of ribosomal proteins into the subunit. Circularly permuted GTPase that catalyzes slow GTP hydrolysis, GTPase activity is stimulated by the 30S ribosomal subunit.</text>
</comment>
<comment type="cofactor">
    <cofactor evidence="1">
        <name>Zn(2+)</name>
        <dbReference type="ChEBI" id="CHEBI:29105"/>
    </cofactor>
    <text evidence="1">Binds 1 zinc ion per subunit.</text>
</comment>
<comment type="subunit">
    <text evidence="1">Monomer. Associates with 30S ribosomal subunit, binds 16S rRNA.</text>
</comment>
<comment type="subcellular location">
    <subcellularLocation>
        <location evidence="1">Cytoplasm</location>
    </subcellularLocation>
</comment>
<comment type="similarity">
    <text evidence="1">Belongs to the TRAFAC class YlqF/YawG GTPase family. RsgA subfamily.</text>
</comment>
<proteinExistence type="inferred from homology"/>
<organism>
    <name type="scientific">Pseudomonas putida (strain ATCC 700007 / DSM 6899 / JCM 31910 / BCRC 17059 / LMG 24140 / F1)</name>
    <dbReference type="NCBI Taxonomy" id="351746"/>
    <lineage>
        <taxon>Bacteria</taxon>
        <taxon>Pseudomonadati</taxon>
        <taxon>Pseudomonadota</taxon>
        <taxon>Gammaproteobacteria</taxon>
        <taxon>Pseudomonadales</taxon>
        <taxon>Pseudomonadaceae</taxon>
        <taxon>Pseudomonas</taxon>
    </lineage>
</organism>
<protein>
    <recommendedName>
        <fullName evidence="1">Small ribosomal subunit biogenesis GTPase RsgA</fullName>
        <ecNumber evidence="1">3.6.1.-</ecNumber>
    </recommendedName>
</protein>
<evidence type="ECO:0000255" key="1">
    <source>
        <dbReference type="HAMAP-Rule" id="MF_01820"/>
    </source>
</evidence>
<evidence type="ECO:0000255" key="2">
    <source>
        <dbReference type="PROSITE-ProRule" id="PRU01058"/>
    </source>
</evidence>
<accession>A5W9T9</accession>
<sequence length="343" mass="37747">MAKRQLNRRQNWRIEKIQGERAARAAKREQHALQELEGGDLGPEQLGLVIAHFGVQVEVEAQDGETAGQVFRCHLRANLPALVTGDRVVWRAGNQGIGVIVAQMPRSTELCRPNNHGQLKPVAANVDLIVIVFAPAPEPHPNLIDRYLVAAEHAGLRPLLLLNKADLINDENGPGLHALLEVYRELGYPLLEVSAHHGDGMQRLQQQLDGHISVFVGQSGVGKSSLVNSLLPDAGTRVGDLSEWSGQGTHTTTTARLYHFPNGGDLIDSPGIREFGLGHVSRDDVEDGFIEFRDLFGTCRFRDCKHDREPGCALLKALEEGRIKPQRMNSYRSIIASLAEDSY</sequence>